<dbReference type="EMBL" id="CU458896">
    <property type="protein sequence ID" value="CAM62508.1"/>
    <property type="molecule type" value="Genomic_DNA"/>
</dbReference>
<dbReference type="RefSeq" id="WP_005079400.1">
    <property type="nucleotide sequence ID" value="NZ_MLCG01000006.1"/>
</dbReference>
<dbReference type="SMR" id="B1MB87"/>
<dbReference type="GeneID" id="93379366"/>
<dbReference type="KEGG" id="mab:MAB_2427"/>
<dbReference type="Proteomes" id="UP000007137">
    <property type="component" value="Chromosome"/>
</dbReference>
<dbReference type="GO" id="GO:0005737">
    <property type="term" value="C:cytoplasm"/>
    <property type="evidence" value="ECO:0007669"/>
    <property type="project" value="UniProtKB-SubCell"/>
</dbReference>
<dbReference type="GO" id="GO:0005525">
    <property type="term" value="F:GTP binding"/>
    <property type="evidence" value="ECO:0007669"/>
    <property type="project" value="UniProtKB-KW"/>
</dbReference>
<dbReference type="GO" id="GO:0003924">
    <property type="term" value="F:GTPase activity"/>
    <property type="evidence" value="ECO:0007669"/>
    <property type="project" value="InterPro"/>
</dbReference>
<dbReference type="GO" id="GO:0016151">
    <property type="term" value="F:nickel cation binding"/>
    <property type="evidence" value="ECO:0007669"/>
    <property type="project" value="UniProtKB-UniRule"/>
</dbReference>
<dbReference type="GO" id="GO:0043419">
    <property type="term" value="P:urea catabolic process"/>
    <property type="evidence" value="ECO:0007669"/>
    <property type="project" value="InterPro"/>
</dbReference>
<dbReference type="CDD" id="cd05540">
    <property type="entry name" value="UreG"/>
    <property type="match status" value="1"/>
</dbReference>
<dbReference type="FunFam" id="3.40.50.300:FF:000208">
    <property type="entry name" value="Urease accessory protein UreG"/>
    <property type="match status" value="1"/>
</dbReference>
<dbReference type="Gene3D" id="3.40.50.300">
    <property type="entry name" value="P-loop containing nucleotide triphosphate hydrolases"/>
    <property type="match status" value="1"/>
</dbReference>
<dbReference type="HAMAP" id="MF_01389">
    <property type="entry name" value="UreG"/>
    <property type="match status" value="1"/>
</dbReference>
<dbReference type="InterPro" id="IPR003495">
    <property type="entry name" value="CobW/HypB/UreG_nucleotide-bd"/>
</dbReference>
<dbReference type="InterPro" id="IPR027417">
    <property type="entry name" value="P-loop_NTPase"/>
</dbReference>
<dbReference type="InterPro" id="IPR004400">
    <property type="entry name" value="UreG"/>
</dbReference>
<dbReference type="NCBIfam" id="TIGR00101">
    <property type="entry name" value="ureG"/>
    <property type="match status" value="1"/>
</dbReference>
<dbReference type="PANTHER" id="PTHR31715">
    <property type="entry name" value="UREASE ACCESSORY PROTEIN G"/>
    <property type="match status" value="1"/>
</dbReference>
<dbReference type="PANTHER" id="PTHR31715:SF0">
    <property type="entry name" value="UREASE ACCESSORY PROTEIN G"/>
    <property type="match status" value="1"/>
</dbReference>
<dbReference type="Pfam" id="PF02492">
    <property type="entry name" value="cobW"/>
    <property type="match status" value="1"/>
</dbReference>
<dbReference type="PIRSF" id="PIRSF005624">
    <property type="entry name" value="Ni-bind_GTPase"/>
    <property type="match status" value="1"/>
</dbReference>
<dbReference type="SUPFAM" id="SSF52540">
    <property type="entry name" value="P-loop containing nucleoside triphosphate hydrolases"/>
    <property type="match status" value="1"/>
</dbReference>
<gene>
    <name evidence="1" type="primary">ureG</name>
    <name type="ordered locus">MAB_2427</name>
</gene>
<reference key="1">
    <citation type="journal article" date="2009" name="PLoS ONE">
        <title>Non mycobacterial virulence genes in the genome of the emerging pathogen Mycobacterium abscessus.</title>
        <authorList>
            <person name="Ripoll F."/>
            <person name="Pasek S."/>
            <person name="Schenowitz C."/>
            <person name="Dossat C."/>
            <person name="Barbe V."/>
            <person name="Rottman M."/>
            <person name="Macheras E."/>
            <person name="Heym B."/>
            <person name="Herrmann J.L."/>
            <person name="Daffe M."/>
            <person name="Brosch R."/>
            <person name="Risler J.L."/>
            <person name="Gaillard J.L."/>
        </authorList>
    </citation>
    <scope>NUCLEOTIDE SEQUENCE [LARGE SCALE GENOMIC DNA]</scope>
    <source>
        <strain>ATCC 19977 / DSM 44196 / CCUG 20993 / CIP 104536 / JCM 13569 / NCTC 13031 / TMC 1543 / L948</strain>
    </source>
</reference>
<comment type="function">
    <text evidence="1">Facilitates the functional incorporation of the urease nickel metallocenter. This process requires GTP hydrolysis, probably effectuated by UreG.</text>
</comment>
<comment type="subunit">
    <text evidence="1">Homodimer. UreD, UreF and UreG form a complex that acts as a GTP-hydrolysis-dependent molecular chaperone, activating the urease apoprotein by helping to assemble the nickel containing metallocenter of UreC. The UreE protein probably delivers the nickel.</text>
</comment>
<comment type="subcellular location">
    <subcellularLocation>
        <location evidence="1">Cytoplasm</location>
    </subcellularLocation>
</comment>
<comment type="similarity">
    <text evidence="1">Belongs to the SIMIBI class G3E GTPase family. UreG subfamily.</text>
</comment>
<sequence length="230" mass="24528">MPPHLIDGQPHQHIDRPRRVRQPGEPLRIGIGGPVGSGKTALVAALCRTLRDEISVAVLTNDIYTTEDADFLRRHAVLPDERITAVQTGGCPHTAIRDDITANLDAIEDLIATNEPLDLILVESGGDNLTATFSSGLIDVQIFVIDVAGGDKVPRKGGPGVTFSDLLVINKTDLAPMVGADLTVMARDAAAVREGRPTAMISLTEDPAASEVLAWVRAHLTEAHQTDHAH</sequence>
<protein>
    <recommendedName>
        <fullName evidence="1">Urease accessory protein UreG</fullName>
    </recommendedName>
</protein>
<proteinExistence type="inferred from homology"/>
<name>UREG_MYCA9</name>
<keyword id="KW-0143">Chaperone</keyword>
<keyword id="KW-0963">Cytoplasm</keyword>
<keyword id="KW-0342">GTP-binding</keyword>
<keyword id="KW-0996">Nickel insertion</keyword>
<keyword id="KW-0547">Nucleotide-binding</keyword>
<keyword id="KW-1185">Reference proteome</keyword>
<organism>
    <name type="scientific">Mycobacteroides abscessus (strain ATCC 19977 / DSM 44196 / CCUG 20993 / CIP 104536 / JCM 13569 / NCTC 13031 / TMC 1543 / L948)</name>
    <name type="common">Mycobacterium abscessus</name>
    <dbReference type="NCBI Taxonomy" id="561007"/>
    <lineage>
        <taxon>Bacteria</taxon>
        <taxon>Bacillati</taxon>
        <taxon>Actinomycetota</taxon>
        <taxon>Actinomycetes</taxon>
        <taxon>Mycobacteriales</taxon>
        <taxon>Mycobacteriaceae</taxon>
        <taxon>Mycobacteroides</taxon>
        <taxon>Mycobacteroides abscessus</taxon>
    </lineage>
</organism>
<accession>B1MB87</accession>
<evidence type="ECO:0000255" key="1">
    <source>
        <dbReference type="HAMAP-Rule" id="MF_01389"/>
    </source>
</evidence>
<feature type="chain" id="PRO_1000145187" description="Urease accessory protein UreG">
    <location>
        <begin position="1"/>
        <end position="230"/>
    </location>
</feature>
<feature type="binding site" evidence="1">
    <location>
        <begin position="33"/>
        <end position="40"/>
    </location>
    <ligand>
        <name>GTP</name>
        <dbReference type="ChEBI" id="CHEBI:37565"/>
    </ligand>
</feature>